<proteinExistence type="evidence at protein level"/>
<protein>
    <recommendedName>
        <fullName>Ferritin-3, chloroplastic</fullName>
        <ecNumber>1.16.3.1</ecNumber>
    </recommendedName>
</protein>
<evidence type="ECO:0000250" key="1"/>
<evidence type="ECO:0000255" key="2"/>
<evidence type="ECO:0000255" key="3">
    <source>
        <dbReference type="PROSITE-ProRule" id="PRU00085"/>
    </source>
</evidence>
<evidence type="ECO:0000269" key="4">
    <source>
    </source>
</evidence>
<evidence type="ECO:0000305" key="5"/>
<reference key="1">
    <citation type="journal article" date="2001" name="Biochem. J.">
        <title>Structure and differential expression of the four members of the Arabidopsis thaliana ferritin gene family.</title>
        <authorList>
            <person name="Petit J.-M."/>
            <person name="Briat J.-F."/>
            <person name="Lobreaux S."/>
        </authorList>
    </citation>
    <scope>NUCLEOTIDE SEQUENCE [MRNA]</scope>
    <scope>INDUCTION</scope>
    <source>
        <strain>cv. Columbia</strain>
    </source>
</reference>
<reference key="2">
    <citation type="journal article" date="2000" name="Nature">
        <title>Sequence and analysis of chromosome 3 of the plant Arabidopsis thaliana.</title>
        <authorList>
            <person name="Salanoubat M."/>
            <person name="Lemcke K."/>
            <person name="Rieger M."/>
            <person name="Ansorge W."/>
            <person name="Unseld M."/>
            <person name="Fartmann B."/>
            <person name="Valle G."/>
            <person name="Bloecker H."/>
            <person name="Perez-Alonso M."/>
            <person name="Obermaier B."/>
            <person name="Delseny M."/>
            <person name="Boutry M."/>
            <person name="Grivell L.A."/>
            <person name="Mache R."/>
            <person name="Puigdomenech P."/>
            <person name="De Simone V."/>
            <person name="Choisne N."/>
            <person name="Artiguenave F."/>
            <person name="Robert C."/>
            <person name="Brottier P."/>
            <person name="Wincker P."/>
            <person name="Cattolico L."/>
            <person name="Weissenbach J."/>
            <person name="Saurin W."/>
            <person name="Quetier F."/>
            <person name="Schaefer M."/>
            <person name="Mueller-Auer S."/>
            <person name="Gabel C."/>
            <person name="Fuchs M."/>
            <person name="Benes V."/>
            <person name="Wurmbach E."/>
            <person name="Drzonek H."/>
            <person name="Erfle H."/>
            <person name="Jordan N."/>
            <person name="Bangert S."/>
            <person name="Wiedelmann R."/>
            <person name="Kranz H."/>
            <person name="Voss H."/>
            <person name="Holland R."/>
            <person name="Brandt P."/>
            <person name="Nyakatura G."/>
            <person name="Vezzi A."/>
            <person name="D'Angelo M."/>
            <person name="Pallavicini A."/>
            <person name="Toppo S."/>
            <person name="Simionati B."/>
            <person name="Conrad A."/>
            <person name="Hornischer K."/>
            <person name="Kauer G."/>
            <person name="Loehnert T.-H."/>
            <person name="Nordsiek G."/>
            <person name="Reichelt J."/>
            <person name="Scharfe M."/>
            <person name="Schoen O."/>
            <person name="Bargues M."/>
            <person name="Terol J."/>
            <person name="Climent J."/>
            <person name="Navarro P."/>
            <person name="Collado C."/>
            <person name="Perez-Perez A."/>
            <person name="Ottenwaelder B."/>
            <person name="Duchemin D."/>
            <person name="Cooke R."/>
            <person name="Laudie M."/>
            <person name="Berger-Llauro C."/>
            <person name="Purnelle B."/>
            <person name="Masuy D."/>
            <person name="de Haan M."/>
            <person name="Maarse A.C."/>
            <person name="Alcaraz J.-P."/>
            <person name="Cottet A."/>
            <person name="Casacuberta E."/>
            <person name="Monfort A."/>
            <person name="Argiriou A."/>
            <person name="Flores M."/>
            <person name="Liguori R."/>
            <person name="Vitale D."/>
            <person name="Mannhaupt G."/>
            <person name="Haase D."/>
            <person name="Schoof H."/>
            <person name="Rudd S."/>
            <person name="Zaccaria P."/>
            <person name="Mewes H.-W."/>
            <person name="Mayer K.F.X."/>
            <person name="Kaul S."/>
            <person name="Town C.D."/>
            <person name="Koo H.L."/>
            <person name="Tallon L.J."/>
            <person name="Jenkins J."/>
            <person name="Rooney T."/>
            <person name="Rizzo M."/>
            <person name="Walts A."/>
            <person name="Utterback T."/>
            <person name="Fujii C.Y."/>
            <person name="Shea T.P."/>
            <person name="Creasy T.H."/>
            <person name="Haas B."/>
            <person name="Maiti R."/>
            <person name="Wu D."/>
            <person name="Peterson J."/>
            <person name="Van Aken S."/>
            <person name="Pai G."/>
            <person name="Militscher J."/>
            <person name="Sellers P."/>
            <person name="Gill J.E."/>
            <person name="Feldblyum T.V."/>
            <person name="Preuss D."/>
            <person name="Lin X."/>
            <person name="Nierman W.C."/>
            <person name="Salzberg S.L."/>
            <person name="White O."/>
            <person name="Venter J.C."/>
            <person name="Fraser C.M."/>
            <person name="Kaneko T."/>
            <person name="Nakamura Y."/>
            <person name="Sato S."/>
            <person name="Kato T."/>
            <person name="Asamizu E."/>
            <person name="Sasamoto S."/>
            <person name="Kimura T."/>
            <person name="Idesawa K."/>
            <person name="Kawashima K."/>
            <person name="Kishida Y."/>
            <person name="Kiyokawa C."/>
            <person name="Kohara M."/>
            <person name="Matsumoto M."/>
            <person name="Matsuno A."/>
            <person name="Muraki A."/>
            <person name="Nakayama S."/>
            <person name="Nakazaki N."/>
            <person name="Shinpo S."/>
            <person name="Takeuchi C."/>
            <person name="Wada T."/>
            <person name="Watanabe A."/>
            <person name="Yamada M."/>
            <person name="Yasuda M."/>
            <person name="Tabata S."/>
        </authorList>
    </citation>
    <scope>NUCLEOTIDE SEQUENCE [LARGE SCALE GENOMIC DNA]</scope>
    <source>
        <strain>cv. Columbia</strain>
    </source>
</reference>
<reference key="3">
    <citation type="journal article" date="2017" name="Plant J.">
        <title>Araport11: a complete reannotation of the Arabidopsis thaliana reference genome.</title>
        <authorList>
            <person name="Cheng C.Y."/>
            <person name="Krishnakumar V."/>
            <person name="Chan A.P."/>
            <person name="Thibaud-Nissen F."/>
            <person name="Schobel S."/>
            <person name="Town C.D."/>
        </authorList>
    </citation>
    <scope>GENOME REANNOTATION</scope>
    <source>
        <strain>cv. Columbia</strain>
    </source>
</reference>
<reference key="4">
    <citation type="journal article" date="2003" name="Science">
        <title>Empirical analysis of transcriptional activity in the Arabidopsis genome.</title>
        <authorList>
            <person name="Yamada K."/>
            <person name="Lim J."/>
            <person name="Dale J.M."/>
            <person name="Chen H."/>
            <person name="Shinn P."/>
            <person name="Palm C.J."/>
            <person name="Southwick A.M."/>
            <person name="Wu H.C."/>
            <person name="Kim C.J."/>
            <person name="Nguyen M."/>
            <person name="Pham P.K."/>
            <person name="Cheuk R.F."/>
            <person name="Karlin-Newmann G."/>
            <person name="Liu S.X."/>
            <person name="Lam B."/>
            <person name="Sakano H."/>
            <person name="Wu T."/>
            <person name="Yu G."/>
            <person name="Miranda M."/>
            <person name="Quach H.L."/>
            <person name="Tripp M."/>
            <person name="Chang C.H."/>
            <person name="Lee J.M."/>
            <person name="Toriumi M.J."/>
            <person name="Chan M.M."/>
            <person name="Tang C.C."/>
            <person name="Onodera C.S."/>
            <person name="Deng J.M."/>
            <person name="Akiyama K."/>
            <person name="Ansari Y."/>
            <person name="Arakawa T."/>
            <person name="Banh J."/>
            <person name="Banno F."/>
            <person name="Bowser L."/>
            <person name="Brooks S.Y."/>
            <person name="Carninci P."/>
            <person name="Chao Q."/>
            <person name="Choy N."/>
            <person name="Enju A."/>
            <person name="Goldsmith A.D."/>
            <person name="Gurjal M."/>
            <person name="Hansen N.F."/>
            <person name="Hayashizaki Y."/>
            <person name="Johnson-Hopson C."/>
            <person name="Hsuan V.W."/>
            <person name="Iida K."/>
            <person name="Karnes M."/>
            <person name="Khan S."/>
            <person name="Koesema E."/>
            <person name="Ishida J."/>
            <person name="Jiang P.X."/>
            <person name="Jones T."/>
            <person name="Kawai J."/>
            <person name="Kamiya A."/>
            <person name="Meyers C."/>
            <person name="Nakajima M."/>
            <person name="Narusaka M."/>
            <person name="Seki M."/>
            <person name="Sakurai T."/>
            <person name="Satou M."/>
            <person name="Tamse R."/>
            <person name="Vaysberg M."/>
            <person name="Wallender E.K."/>
            <person name="Wong C."/>
            <person name="Yamamura Y."/>
            <person name="Yuan S."/>
            <person name="Shinozaki K."/>
            <person name="Davis R.W."/>
            <person name="Theologis A."/>
            <person name="Ecker J.R."/>
        </authorList>
    </citation>
    <scope>NUCLEOTIDE SEQUENCE [LARGE SCALE MRNA]</scope>
    <source>
        <strain>cv. Columbia</strain>
    </source>
</reference>
<gene>
    <name type="primary">FER3</name>
    <name type="ordered locus">At3g56090</name>
    <name type="ORF">F18O21_50</name>
</gene>
<dbReference type="EC" id="1.16.3.1"/>
<dbReference type="EMBL" id="AJ312190">
    <property type="protein sequence ID" value="CAC85399.1"/>
    <property type="molecule type" value="mRNA"/>
</dbReference>
<dbReference type="EMBL" id="AL163763">
    <property type="protein sequence ID" value="CAB87408.1"/>
    <property type="molecule type" value="Genomic_DNA"/>
</dbReference>
<dbReference type="EMBL" id="CP002686">
    <property type="protein sequence ID" value="AEE79476.1"/>
    <property type="molecule type" value="Genomic_DNA"/>
</dbReference>
<dbReference type="EMBL" id="AY072221">
    <property type="protein sequence ID" value="AAL60042.1"/>
    <property type="molecule type" value="mRNA"/>
</dbReference>
<dbReference type="EMBL" id="AY122951">
    <property type="protein sequence ID" value="AAM67484.1"/>
    <property type="molecule type" value="mRNA"/>
</dbReference>
<dbReference type="PIR" id="T47726">
    <property type="entry name" value="T47726"/>
</dbReference>
<dbReference type="RefSeq" id="NP_191168.1">
    <property type="nucleotide sequence ID" value="NM_115467.5"/>
</dbReference>
<dbReference type="SMR" id="Q9LYN2"/>
<dbReference type="BioGRID" id="10091">
    <property type="interactions" value="6"/>
</dbReference>
<dbReference type="FunCoup" id="Q9LYN2">
    <property type="interactions" value="345"/>
</dbReference>
<dbReference type="IntAct" id="Q9LYN2">
    <property type="interactions" value="3"/>
</dbReference>
<dbReference type="STRING" id="3702.Q9LYN2"/>
<dbReference type="PaxDb" id="3702-AT3G56090.1"/>
<dbReference type="ProteomicsDB" id="230547"/>
<dbReference type="EnsemblPlants" id="AT3G56090.1">
    <property type="protein sequence ID" value="AT3G56090.1"/>
    <property type="gene ID" value="AT3G56090"/>
</dbReference>
<dbReference type="GeneID" id="824775"/>
<dbReference type="Gramene" id="AT3G56090.1">
    <property type="protein sequence ID" value="AT3G56090.1"/>
    <property type="gene ID" value="AT3G56090"/>
</dbReference>
<dbReference type="KEGG" id="ath:AT3G56090"/>
<dbReference type="Araport" id="AT3G56090"/>
<dbReference type="TAIR" id="AT3G56090">
    <property type="gene designation" value="FER3"/>
</dbReference>
<dbReference type="eggNOG" id="KOG2332">
    <property type="taxonomic scope" value="Eukaryota"/>
</dbReference>
<dbReference type="HOGENOM" id="CLU_065681_0_0_1"/>
<dbReference type="InParanoid" id="Q9LYN2"/>
<dbReference type="OMA" id="REHACKF"/>
<dbReference type="OrthoDB" id="186462at2759"/>
<dbReference type="PhylomeDB" id="Q9LYN2"/>
<dbReference type="BioCyc" id="ARA:AT3G56090-MONOMER"/>
<dbReference type="PRO" id="PR:Q9LYN2"/>
<dbReference type="Proteomes" id="UP000006548">
    <property type="component" value="Chromosome 3"/>
</dbReference>
<dbReference type="ExpressionAtlas" id="Q9LYN2">
    <property type="expression patterns" value="baseline and differential"/>
</dbReference>
<dbReference type="GO" id="GO:0009507">
    <property type="term" value="C:chloroplast"/>
    <property type="evidence" value="ECO:0007005"/>
    <property type="project" value="TAIR"/>
</dbReference>
<dbReference type="GO" id="GO:0009941">
    <property type="term" value="C:chloroplast envelope"/>
    <property type="evidence" value="ECO:0007005"/>
    <property type="project" value="TAIR"/>
</dbReference>
<dbReference type="GO" id="GO:0009570">
    <property type="term" value="C:chloroplast stroma"/>
    <property type="evidence" value="ECO:0007005"/>
    <property type="project" value="TAIR"/>
</dbReference>
<dbReference type="GO" id="GO:0005829">
    <property type="term" value="C:cytosol"/>
    <property type="evidence" value="ECO:0007005"/>
    <property type="project" value="TAIR"/>
</dbReference>
<dbReference type="GO" id="GO:0008199">
    <property type="term" value="F:ferric iron binding"/>
    <property type="evidence" value="ECO:0007669"/>
    <property type="project" value="InterPro"/>
</dbReference>
<dbReference type="GO" id="GO:0004322">
    <property type="term" value="F:ferroxidase activity"/>
    <property type="evidence" value="ECO:0007669"/>
    <property type="project" value="UniProtKB-EC"/>
</dbReference>
<dbReference type="GO" id="GO:0009908">
    <property type="term" value="P:flower development"/>
    <property type="evidence" value="ECO:0000316"/>
    <property type="project" value="TAIR"/>
</dbReference>
<dbReference type="GO" id="GO:0006879">
    <property type="term" value="P:intracellular iron ion homeostasis"/>
    <property type="evidence" value="ECO:0007669"/>
    <property type="project" value="UniProtKB-KW"/>
</dbReference>
<dbReference type="GO" id="GO:0006826">
    <property type="term" value="P:iron ion transport"/>
    <property type="evidence" value="ECO:0000316"/>
    <property type="project" value="TAIR"/>
</dbReference>
<dbReference type="GO" id="GO:0048366">
    <property type="term" value="P:leaf development"/>
    <property type="evidence" value="ECO:0000316"/>
    <property type="project" value="TAIR"/>
</dbReference>
<dbReference type="GO" id="GO:0015979">
    <property type="term" value="P:photosynthesis"/>
    <property type="evidence" value="ECO:0000316"/>
    <property type="project" value="TAIR"/>
</dbReference>
<dbReference type="GO" id="GO:0010039">
    <property type="term" value="P:response to iron ion"/>
    <property type="evidence" value="ECO:0000270"/>
    <property type="project" value="TAIR"/>
</dbReference>
<dbReference type="GO" id="GO:0000302">
    <property type="term" value="P:response to reactive oxygen species"/>
    <property type="evidence" value="ECO:0000316"/>
    <property type="project" value="TAIR"/>
</dbReference>
<dbReference type="CDD" id="cd01056">
    <property type="entry name" value="Euk_Ferritin"/>
    <property type="match status" value="1"/>
</dbReference>
<dbReference type="FunFam" id="1.20.1260.10:FF:000006">
    <property type="entry name" value="Ferritin"/>
    <property type="match status" value="1"/>
</dbReference>
<dbReference type="Gene3D" id="1.20.1260.10">
    <property type="match status" value="1"/>
</dbReference>
<dbReference type="InterPro" id="IPR001519">
    <property type="entry name" value="Ferritin"/>
</dbReference>
<dbReference type="InterPro" id="IPR012347">
    <property type="entry name" value="Ferritin-like"/>
</dbReference>
<dbReference type="InterPro" id="IPR009040">
    <property type="entry name" value="Ferritin-like_diiron"/>
</dbReference>
<dbReference type="InterPro" id="IPR009078">
    <property type="entry name" value="Ferritin-like_SF"/>
</dbReference>
<dbReference type="InterPro" id="IPR014034">
    <property type="entry name" value="Ferritin_CS"/>
</dbReference>
<dbReference type="InterPro" id="IPR008331">
    <property type="entry name" value="Ferritin_DPS_dom"/>
</dbReference>
<dbReference type="PANTHER" id="PTHR11431">
    <property type="entry name" value="FERRITIN"/>
    <property type="match status" value="1"/>
</dbReference>
<dbReference type="PANTHER" id="PTHR11431:SF102">
    <property type="entry name" value="FERRITIN-3, CHLOROPLASTIC"/>
    <property type="match status" value="1"/>
</dbReference>
<dbReference type="Pfam" id="PF00210">
    <property type="entry name" value="Ferritin"/>
    <property type="match status" value="1"/>
</dbReference>
<dbReference type="SUPFAM" id="SSF47240">
    <property type="entry name" value="Ferritin-like"/>
    <property type="match status" value="1"/>
</dbReference>
<dbReference type="PROSITE" id="PS00204">
    <property type="entry name" value="FERRITIN_2"/>
    <property type="match status" value="1"/>
</dbReference>
<dbReference type="PROSITE" id="PS50905">
    <property type="entry name" value="FERRITIN_LIKE"/>
    <property type="match status" value="1"/>
</dbReference>
<sequence>MLLKAASTFSLLNIHGEKKDISPLFSSSSSISSPVSSGKSGNLSFPLRASKSSTTTTSTLSGVVFEPFEEVKKEMDLVPSGQQLSLARHLYSPECEAAVNEQINVEYNVSYVYHALYAYFDRDNVALKGLAKFFKESSVEEREHAELLMEYQNKRGGRVKLQPMVLPQSEFDHPEKGDALYAMELALSLEKLVNEKLLNLHSVASKNDDVQLADFIESVFLNEQVEAIKKISEYVSQLRRLGKGHGTWHFDQELLGAAA</sequence>
<feature type="transit peptide" description="Chloroplast" evidence="2">
    <location>
        <begin position="1"/>
        <end position="49"/>
    </location>
</feature>
<feature type="chain" id="PRO_0000008856" description="Ferritin-3, chloroplastic">
    <location>
        <begin position="50"/>
        <end position="259"/>
    </location>
</feature>
<feature type="domain" description="Ferritin-like diiron" evidence="3">
    <location>
        <begin position="89"/>
        <end position="242"/>
    </location>
</feature>
<feature type="region of interest" description="Extension peptide (EP)">
    <location>
        <begin position="50"/>
        <end position="88"/>
    </location>
</feature>
<feature type="binding site" evidence="3">
    <location>
        <position position="106"/>
    </location>
    <ligand>
        <name>Fe cation</name>
        <dbReference type="ChEBI" id="CHEBI:24875"/>
        <label>1</label>
    </ligand>
</feature>
<feature type="binding site" evidence="3">
    <location>
        <position position="141"/>
    </location>
    <ligand>
        <name>Fe cation</name>
        <dbReference type="ChEBI" id="CHEBI:24875"/>
        <label>1</label>
    </ligand>
</feature>
<feature type="binding site" evidence="3">
    <location>
        <position position="141"/>
    </location>
    <ligand>
        <name>Fe cation</name>
        <dbReference type="ChEBI" id="CHEBI:24875"/>
        <label>2</label>
    </ligand>
</feature>
<feature type="binding site" evidence="3">
    <location>
        <position position="144"/>
    </location>
    <ligand>
        <name>Fe cation</name>
        <dbReference type="ChEBI" id="CHEBI:24875"/>
        <label>1</label>
    </ligand>
</feature>
<feature type="binding site" evidence="3">
    <location>
        <position position="190"/>
    </location>
    <ligand>
        <name>Fe cation</name>
        <dbReference type="ChEBI" id="CHEBI:24875"/>
        <label>2</label>
    </ligand>
</feature>
<feature type="binding site" evidence="3">
    <location>
        <position position="224"/>
    </location>
    <ligand>
        <name>Fe cation</name>
        <dbReference type="ChEBI" id="CHEBI:24875"/>
        <label>2</label>
    </ligand>
</feature>
<accession>Q9LYN2</accession>
<accession>Q8WHW6</accession>
<name>FRI3_ARATH</name>
<organism>
    <name type="scientific">Arabidopsis thaliana</name>
    <name type="common">Mouse-ear cress</name>
    <dbReference type="NCBI Taxonomy" id="3702"/>
    <lineage>
        <taxon>Eukaryota</taxon>
        <taxon>Viridiplantae</taxon>
        <taxon>Streptophyta</taxon>
        <taxon>Embryophyta</taxon>
        <taxon>Tracheophyta</taxon>
        <taxon>Spermatophyta</taxon>
        <taxon>Magnoliopsida</taxon>
        <taxon>eudicotyledons</taxon>
        <taxon>Gunneridae</taxon>
        <taxon>Pentapetalae</taxon>
        <taxon>rosids</taxon>
        <taxon>malvids</taxon>
        <taxon>Brassicales</taxon>
        <taxon>Brassicaceae</taxon>
        <taxon>Camelineae</taxon>
        <taxon>Arabidopsis</taxon>
    </lineage>
</organism>
<comment type="function">
    <text evidence="1">Stores iron in a soluble, non-toxic, readily available form. Important for iron homeostasis. Has ferroxidase activity. Iron is taken up in the ferrous form and deposited as ferric hydroxides after oxidation (By similarity).</text>
</comment>
<comment type="catalytic activity">
    <reaction>
        <text>4 Fe(2+) + O2 + 4 H(+) = 4 Fe(3+) + 2 H2O</text>
        <dbReference type="Rhea" id="RHEA:11148"/>
        <dbReference type="ChEBI" id="CHEBI:15377"/>
        <dbReference type="ChEBI" id="CHEBI:15378"/>
        <dbReference type="ChEBI" id="CHEBI:15379"/>
        <dbReference type="ChEBI" id="CHEBI:29033"/>
        <dbReference type="ChEBI" id="CHEBI:29034"/>
        <dbReference type="EC" id="1.16.3.1"/>
    </reaction>
</comment>
<comment type="subunit">
    <text evidence="1">Oligomer of 24 subunits. There are two types of subunits: L (light) chain and H (heavy) chain. The major chain can be light or heavy, depending on the species and tissue type. The functional molecule forms a roughly spherical shell with a diameter of 12 nm and contains a central cavity into which the insoluble mineral iron core is deposited (By similarity).</text>
</comment>
<comment type="interaction">
    <interactant intactId="EBI-21138118">
        <id>Q9LYN2</id>
    </interactant>
    <interactant intactId="EBI-25513208">
        <id>Q39101</id>
        <label>FER1</label>
    </interactant>
    <organismsDiffer>false</organismsDiffer>
    <experiments>3</experiments>
</comment>
<comment type="subcellular location">
    <subcellularLocation>
        <location evidence="1">Plastid</location>
        <location evidence="1">Chloroplast</location>
    </subcellularLocation>
</comment>
<comment type="induction">
    <text evidence="4">By iron overload treatment.</text>
</comment>
<comment type="similarity">
    <text evidence="5">Belongs to the ferritin family.</text>
</comment>
<keyword id="KW-0150">Chloroplast</keyword>
<keyword id="KW-0408">Iron</keyword>
<keyword id="KW-0409">Iron storage</keyword>
<keyword id="KW-0479">Metal-binding</keyword>
<keyword id="KW-0560">Oxidoreductase</keyword>
<keyword id="KW-0934">Plastid</keyword>
<keyword id="KW-1185">Reference proteome</keyword>
<keyword id="KW-0809">Transit peptide</keyword>